<reference key="1">
    <citation type="submission" date="2007-06" db="EMBL/GenBank/DDBJ databases">
        <title>Complete sequence of chromosome of Staphylococcus aureus subsp. aureus JH1.</title>
        <authorList>
            <consortium name="US DOE Joint Genome Institute"/>
            <person name="Copeland A."/>
            <person name="Lucas S."/>
            <person name="Lapidus A."/>
            <person name="Barry K."/>
            <person name="Detter J.C."/>
            <person name="Glavina del Rio T."/>
            <person name="Hammon N."/>
            <person name="Israni S."/>
            <person name="Dalin E."/>
            <person name="Tice H."/>
            <person name="Pitluck S."/>
            <person name="Chain P."/>
            <person name="Malfatti S."/>
            <person name="Shin M."/>
            <person name="Vergez L."/>
            <person name="Schmutz J."/>
            <person name="Larimer F."/>
            <person name="Land M."/>
            <person name="Hauser L."/>
            <person name="Kyrpides N."/>
            <person name="Ivanova N."/>
            <person name="Tomasz A."/>
            <person name="Richardson P."/>
        </authorList>
    </citation>
    <scope>NUCLEOTIDE SEQUENCE [LARGE SCALE GENOMIC DNA]</scope>
    <source>
        <strain>JH1</strain>
    </source>
</reference>
<sequence>MTKYTFKPKDFKAFNVEGLDARMEALNEYIRPQLHELGEYFSDFFTSQTGETFYPHVAKHARRSVNPPKDTWVAFATSKRGYKMLPHFQIGMFEDQLFVMFGIMHEAKDKATRAKVFERKFKAIQQLPDDYRVCLDHMKPDKPFIKDLTDDDLKEAIQRAINVKKGEFFIARAITPQDKRLKSDKAFIAFLEETFDQFLPFYSA</sequence>
<gene>
    <name type="ordered locus">SaurJH1_1188</name>
</gene>
<comment type="similarity">
    <text evidence="1">Belongs to the UPF0637 family.</text>
</comment>
<proteinExistence type="inferred from homology"/>
<protein>
    <recommendedName>
        <fullName evidence="1">UPF0637 protein SaurJH1_1188</fullName>
    </recommendedName>
</protein>
<organism>
    <name type="scientific">Staphylococcus aureus (strain JH1)</name>
    <dbReference type="NCBI Taxonomy" id="359787"/>
    <lineage>
        <taxon>Bacteria</taxon>
        <taxon>Bacillati</taxon>
        <taxon>Bacillota</taxon>
        <taxon>Bacilli</taxon>
        <taxon>Bacillales</taxon>
        <taxon>Staphylococcaceae</taxon>
        <taxon>Staphylococcus</taxon>
    </lineage>
</organism>
<dbReference type="EMBL" id="CP000736">
    <property type="protein sequence ID" value="ABR52042.1"/>
    <property type="molecule type" value="Genomic_DNA"/>
</dbReference>
<dbReference type="SMR" id="A6U0S4"/>
<dbReference type="KEGG" id="sah:SaurJH1_1188"/>
<dbReference type="HOGENOM" id="CLU_096059_0_0_9"/>
<dbReference type="Gene3D" id="3.30.930.20">
    <property type="entry name" value="Protein of unknown function DUF1054"/>
    <property type="match status" value="1"/>
</dbReference>
<dbReference type="HAMAP" id="MF_01851">
    <property type="entry name" value="UPF0637"/>
    <property type="match status" value="1"/>
</dbReference>
<dbReference type="InterPro" id="IPR009403">
    <property type="entry name" value="UPF0637"/>
</dbReference>
<dbReference type="InterPro" id="IPR053707">
    <property type="entry name" value="UPF0637_domain_sf"/>
</dbReference>
<dbReference type="Pfam" id="PF06335">
    <property type="entry name" value="DUF1054"/>
    <property type="match status" value="1"/>
</dbReference>
<dbReference type="PIRSF" id="PIRSF021332">
    <property type="entry name" value="DUF1054"/>
    <property type="match status" value="1"/>
</dbReference>
<dbReference type="SUPFAM" id="SSF142913">
    <property type="entry name" value="YktB/PF0168-like"/>
    <property type="match status" value="1"/>
</dbReference>
<feature type="chain" id="PRO_0000348321" description="UPF0637 protein SaurJH1_1188">
    <location>
        <begin position="1"/>
        <end position="204"/>
    </location>
</feature>
<accession>A6U0S4</accession>
<name>Y1188_STAA2</name>
<evidence type="ECO:0000255" key="1">
    <source>
        <dbReference type="HAMAP-Rule" id="MF_01851"/>
    </source>
</evidence>